<accession>B5ZC48</accession>
<dbReference type="EMBL" id="CP001184">
    <property type="protein sequence ID" value="ACI60311.1"/>
    <property type="molecule type" value="Genomic_DNA"/>
</dbReference>
<dbReference type="RefSeq" id="WP_004025539.1">
    <property type="nucleotide sequence ID" value="NC_011374.1"/>
</dbReference>
<dbReference type="SMR" id="B5ZC48"/>
<dbReference type="STRING" id="565575.UUR10_0632"/>
<dbReference type="GeneID" id="93849088"/>
<dbReference type="KEGG" id="uue:UUR10_0632"/>
<dbReference type="eggNOG" id="COG0081">
    <property type="taxonomic scope" value="Bacteria"/>
</dbReference>
<dbReference type="HOGENOM" id="CLU_062853_0_0_14"/>
<dbReference type="OrthoDB" id="9803740at2"/>
<dbReference type="Proteomes" id="UP000002018">
    <property type="component" value="Chromosome"/>
</dbReference>
<dbReference type="GO" id="GO:0015934">
    <property type="term" value="C:large ribosomal subunit"/>
    <property type="evidence" value="ECO:0007669"/>
    <property type="project" value="InterPro"/>
</dbReference>
<dbReference type="GO" id="GO:0019843">
    <property type="term" value="F:rRNA binding"/>
    <property type="evidence" value="ECO:0007669"/>
    <property type="project" value="UniProtKB-UniRule"/>
</dbReference>
<dbReference type="GO" id="GO:0003735">
    <property type="term" value="F:structural constituent of ribosome"/>
    <property type="evidence" value="ECO:0007669"/>
    <property type="project" value="InterPro"/>
</dbReference>
<dbReference type="GO" id="GO:0000049">
    <property type="term" value="F:tRNA binding"/>
    <property type="evidence" value="ECO:0007669"/>
    <property type="project" value="UniProtKB-KW"/>
</dbReference>
<dbReference type="GO" id="GO:0006417">
    <property type="term" value="P:regulation of translation"/>
    <property type="evidence" value="ECO:0007669"/>
    <property type="project" value="UniProtKB-KW"/>
</dbReference>
<dbReference type="GO" id="GO:0006412">
    <property type="term" value="P:translation"/>
    <property type="evidence" value="ECO:0007669"/>
    <property type="project" value="UniProtKB-UniRule"/>
</dbReference>
<dbReference type="CDD" id="cd00403">
    <property type="entry name" value="Ribosomal_L1"/>
    <property type="match status" value="1"/>
</dbReference>
<dbReference type="FunFam" id="3.40.50.790:FF:000001">
    <property type="entry name" value="50S ribosomal protein L1"/>
    <property type="match status" value="1"/>
</dbReference>
<dbReference type="Gene3D" id="3.30.190.20">
    <property type="match status" value="1"/>
</dbReference>
<dbReference type="Gene3D" id="3.40.50.790">
    <property type="match status" value="1"/>
</dbReference>
<dbReference type="HAMAP" id="MF_01318_B">
    <property type="entry name" value="Ribosomal_uL1_B"/>
    <property type="match status" value="1"/>
</dbReference>
<dbReference type="InterPro" id="IPR005878">
    <property type="entry name" value="Ribosom_uL1_bac-type"/>
</dbReference>
<dbReference type="InterPro" id="IPR002143">
    <property type="entry name" value="Ribosomal_uL1"/>
</dbReference>
<dbReference type="InterPro" id="IPR023674">
    <property type="entry name" value="Ribosomal_uL1-like"/>
</dbReference>
<dbReference type="InterPro" id="IPR028364">
    <property type="entry name" value="Ribosomal_uL1/biogenesis"/>
</dbReference>
<dbReference type="InterPro" id="IPR016095">
    <property type="entry name" value="Ribosomal_uL1_3-a/b-sand"/>
</dbReference>
<dbReference type="InterPro" id="IPR023673">
    <property type="entry name" value="Ribosomal_uL1_CS"/>
</dbReference>
<dbReference type="NCBIfam" id="TIGR01169">
    <property type="entry name" value="rplA_bact"/>
    <property type="match status" value="1"/>
</dbReference>
<dbReference type="PANTHER" id="PTHR36427">
    <property type="entry name" value="54S RIBOSOMAL PROTEIN L1, MITOCHONDRIAL"/>
    <property type="match status" value="1"/>
</dbReference>
<dbReference type="PANTHER" id="PTHR36427:SF3">
    <property type="entry name" value="LARGE RIBOSOMAL SUBUNIT PROTEIN UL1M"/>
    <property type="match status" value="1"/>
</dbReference>
<dbReference type="Pfam" id="PF00687">
    <property type="entry name" value="Ribosomal_L1"/>
    <property type="match status" value="1"/>
</dbReference>
<dbReference type="PIRSF" id="PIRSF002155">
    <property type="entry name" value="Ribosomal_L1"/>
    <property type="match status" value="1"/>
</dbReference>
<dbReference type="SUPFAM" id="SSF56808">
    <property type="entry name" value="Ribosomal protein L1"/>
    <property type="match status" value="1"/>
</dbReference>
<dbReference type="PROSITE" id="PS01199">
    <property type="entry name" value="RIBOSOMAL_L1"/>
    <property type="match status" value="1"/>
</dbReference>
<comment type="function">
    <text evidence="1">Binds directly to 23S rRNA. The L1 stalk is quite mobile in the ribosome, and is involved in E site tRNA release.</text>
</comment>
<comment type="function">
    <text evidence="1">Protein L1 is also a translational repressor protein, it controls the translation of the L11 operon by binding to its mRNA.</text>
</comment>
<comment type="subunit">
    <text evidence="1">Part of the 50S ribosomal subunit.</text>
</comment>
<comment type="similarity">
    <text evidence="1">Belongs to the universal ribosomal protein uL1 family.</text>
</comment>
<organism>
    <name type="scientific">Ureaplasma urealyticum serovar 10 (strain ATCC 33699 / Western)</name>
    <dbReference type="NCBI Taxonomy" id="565575"/>
    <lineage>
        <taxon>Bacteria</taxon>
        <taxon>Bacillati</taxon>
        <taxon>Mycoplasmatota</taxon>
        <taxon>Mycoplasmoidales</taxon>
        <taxon>Mycoplasmoidaceae</taxon>
        <taxon>Ureaplasma</taxon>
    </lineage>
</organism>
<protein>
    <recommendedName>
        <fullName evidence="1">Large ribosomal subunit protein uL1</fullName>
    </recommendedName>
    <alternativeName>
        <fullName evidence="2">50S ribosomal protein L1</fullName>
    </alternativeName>
</protein>
<name>RL1_UREU1</name>
<feature type="chain" id="PRO_1000141479" description="Large ribosomal subunit protein uL1">
    <location>
        <begin position="1"/>
        <end position="229"/>
    </location>
</feature>
<gene>
    <name evidence="1" type="primary">rplA</name>
    <name type="ordered locus">UUR10_0632</name>
</gene>
<keyword id="KW-0678">Repressor</keyword>
<keyword id="KW-0687">Ribonucleoprotein</keyword>
<keyword id="KW-0689">Ribosomal protein</keyword>
<keyword id="KW-0694">RNA-binding</keyword>
<keyword id="KW-0699">rRNA-binding</keyword>
<keyword id="KW-0810">Translation regulation</keyword>
<keyword id="KW-0820">tRNA-binding</keyword>
<reference key="1">
    <citation type="submission" date="2008-10" db="EMBL/GenBank/DDBJ databases">
        <title>Genome sequence of Ureaplasma urealyticum serovar 10 ATCC-33699.</title>
        <authorList>
            <person name="Shrivastava S."/>
            <person name="Methe B.A."/>
            <person name="Glass J."/>
            <person name="White K."/>
            <person name="Duffy L.B."/>
        </authorList>
    </citation>
    <scope>NUCLEOTIDE SEQUENCE [LARGE SCALE GENOMIC DNA]</scope>
    <source>
        <strain>ATCC 33699 / Western</strain>
    </source>
</reference>
<sequence length="229" mass="25047">MAKISKKLSAAYEGIDKQKAYPLFDAIKLAQEKSITKFDGSINIAVKLNLDTTKVEQQLRGSISLPNGNGKNVRVLVLSEDITKEQAAAVGADYFGGADYIQNIEKMLNQIDVIITNQKMMPLLAKLGKVLGPRGLMPNPKIGTVTNDVLKAVEEFKKGRIEYRTDTYGNIHMSIGRVSFETAKIEENANALLSLIRSKKPATVKGQYIQNIAISPTMGPGIKVIINNN</sequence>
<evidence type="ECO:0000255" key="1">
    <source>
        <dbReference type="HAMAP-Rule" id="MF_01318"/>
    </source>
</evidence>
<evidence type="ECO:0000305" key="2"/>
<proteinExistence type="inferred from homology"/>